<gene>
    <name evidence="2" type="primary">dgcQ</name>
    <name type="synonym">yedQ</name>
    <name type="ordered locus">SF2000</name>
    <name type="ordered locus">S2095</name>
</gene>
<protein>
    <recommendedName>
        <fullName evidence="2">Putative diguanylate cyclase DgcQ</fullName>
        <shortName evidence="2">DGC</shortName>
        <ecNumber evidence="2">2.7.7.65</ecNumber>
    </recommendedName>
    <alternativeName>
        <fullName evidence="2">Cellulose synthesis regulatory protein</fullName>
    </alternativeName>
</protein>
<reference key="1">
    <citation type="journal article" date="2002" name="Nucleic Acids Res.">
        <title>Genome sequence of Shigella flexneri 2a: insights into pathogenicity through comparison with genomes of Escherichia coli K12 and O157.</title>
        <authorList>
            <person name="Jin Q."/>
            <person name="Yuan Z."/>
            <person name="Xu J."/>
            <person name="Wang Y."/>
            <person name="Shen Y."/>
            <person name="Lu W."/>
            <person name="Wang J."/>
            <person name="Liu H."/>
            <person name="Yang J."/>
            <person name="Yang F."/>
            <person name="Zhang X."/>
            <person name="Zhang J."/>
            <person name="Yang G."/>
            <person name="Wu H."/>
            <person name="Qu D."/>
            <person name="Dong J."/>
            <person name="Sun L."/>
            <person name="Xue Y."/>
            <person name="Zhao A."/>
            <person name="Gao Y."/>
            <person name="Zhu J."/>
            <person name="Kan B."/>
            <person name="Ding K."/>
            <person name="Chen S."/>
            <person name="Cheng H."/>
            <person name="Yao Z."/>
            <person name="He B."/>
            <person name="Chen R."/>
            <person name="Ma D."/>
            <person name="Qiang B."/>
            <person name="Wen Y."/>
            <person name="Hou Y."/>
            <person name="Yu J."/>
        </authorList>
    </citation>
    <scope>NUCLEOTIDE SEQUENCE [LARGE SCALE GENOMIC DNA]</scope>
    <source>
        <strain>301 / Serotype 2a</strain>
    </source>
</reference>
<reference key="2">
    <citation type="journal article" date="2003" name="Infect. Immun.">
        <title>Complete genome sequence and comparative genomics of Shigella flexneri serotype 2a strain 2457T.</title>
        <authorList>
            <person name="Wei J."/>
            <person name="Goldberg M.B."/>
            <person name="Burland V."/>
            <person name="Venkatesan M.M."/>
            <person name="Deng W."/>
            <person name="Fournier G."/>
            <person name="Mayhew G.F."/>
            <person name="Plunkett G. III"/>
            <person name="Rose D.J."/>
            <person name="Darling A."/>
            <person name="Mau B."/>
            <person name="Perna N.T."/>
            <person name="Payne S.M."/>
            <person name="Runyen-Janecky L.J."/>
            <person name="Zhou S."/>
            <person name="Schwartz D.C."/>
            <person name="Blattner F.R."/>
        </authorList>
    </citation>
    <scope>NUCLEOTIDE SEQUENCE [LARGE SCALE GENOMIC DNA]</scope>
    <source>
        <strain>ATCC 700930 / 2457T / Serotype 2a</strain>
    </source>
</reference>
<accession>Q83KM9</accession>
<proteinExistence type="uncertain"/>
<name>DGCQ_SHIFL</name>
<comment type="function">
    <text evidence="1 2">Catalyzes the synthesis of cyclic-di-GMP (c-di-GMP) via the condensation of 2 GTP molecules (By similarity). Cyclic-di-GMP is a second messenger which controls cell surface-associated traits in bacteria. Involved in the regulation of cellulose production (By similarity).</text>
</comment>
<comment type="catalytic activity">
    <reaction evidence="1">
        <text>2 GTP = 3',3'-c-di-GMP + 2 diphosphate</text>
        <dbReference type="Rhea" id="RHEA:24898"/>
        <dbReference type="ChEBI" id="CHEBI:33019"/>
        <dbReference type="ChEBI" id="CHEBI:37565"/>
        <dbReference type="ChEBI" id="CHEBI:58805"/>
        <dbReference type="EC" id="2.7.7.65"/>
    </reaction>
</comment>
<comment type="cofactor">
    <cofactor evidence="1">
        <name>Mg(2+)</name>
        <dbReference type="ChEBI" id="CHEBI:18420"/>
    </cofactor>
    <text evidence="1">Binds 1 Mg(2+) ion per monomer.</text>
</comment>
<comment type="pathway">
    <text evidence="2">Glycan metabolism; bacterial cellulose biosynthesis.</text>
</comment>
<comment type="pathway">
    <text evidence="2">Purine metabolism; 3',5'-cyclic di-GMP biosynthesis.</text>
</comment>
<comment type="subunit">
    <text evidence="1">Homodimer.</text>
</comment>
<comment type="subcellular location">
    <subcellularLocation>
        <location evidence="5">Cell inner membrane</location>
        <topology evidence="3">Multi-pass membrane protein</topology>
    </subcellularLocation>
</comment>
<comment type="caution">
    <text evidence="5">Could be the product of a pseudogene.</text>
</comment>
<comment type="sequence caution" evidence="5">
    <conflict type="erroneous termination">
        <sequence resource="EMBL-CDS" id="AAN43546"/>
    </conflict>
    <text>Truncated C-terminus.</text>
</comment>
<organism>
    <name type="scientific">Shigella flexneri</name>
    <dbReference type="NCBI Taxonomy" id="623"/>
    <lineage>
        <taxon>Bacteria</taxon>
        <taxon>Pseudomonadati</taxon>
        <taxon>Pseudomonadota</taxon>
        <taxon>Gammaproteobacteria</taxon>
        <taxon>Enterobacterales</taxon>
        <taxon>Enterobacteriaceae</taxon>
        <taxon>Shigella</taxon>
    </lineage>
</organism>
<dbReference type="EC" id="2.7.7.65" evidence="2"/>
<dbReference type="EMBL" id="AE005674">
    <property type="protein sequence ID" value="AAN43546.1"/>
    <property type="status" value="ALT_SEQ"/>
    <property type="molecule type" value="Genomic_DNA"/>
</dbReference>
<dbReference type="EMBL" id="AE014073">
    <property type="status" value="NOT_ANNOTATED_CDS"/>
    <property type="molecule type" value="Genomic_DNA"/>
</dbReference>
<dbReference type="RefSeq" id="NP_707839.1">
    <property type="nucleotide sequence ID" value="NC_004337.2"/>
</dbReference>
<dbReference type="SMR" id="Q83KM9"/>
<dbReference type="STRING" id="198214.SF2000"/>
<dbReference type="PaxDb" id="198214-SF2000"/>
<dbReference type="GeneID" id="1025207"/>
<dbReference type="KEGG" id="sfl:SF2000"/>
<dbReference type="PATRIC" id="fig|198214.7.peg.2389"/>
<dbReference type="HOGENOM" id="CLU_000445_11_23_6"/>
<dbReference type="UniPathway" id="UPA00599"/>
<dbReference type="UniPathway" id="UPA00694"/>
<dbReference type="Proteomes" id="UP000001006">
    <property type="component" value="Chromosome"/>
</dbReference>
<dbReference type="Proteomes" id="UP000002673">
    <property type="component" value="Chromosome"/>
</dbReference>
<dbReference type="GO" id="GO:0005886">
    <property type="term" value="C:plasma membrane"/>
    <property type="evidence" value="ECO:0007669"/>
    <property type="project" value="UniProtKB-SubCell"/>
</dbReference>
<dbReference type="GO" id="GO:0052621">
    <property type="term" value="F:diguanylate cyclase activity"/>
    <property type="evidence" value="ECO:0007669"/>
    <property type="project" value="UniProtKB-EC"/>
</dbReference>
<dbReference type="GO" id="GO:0005525">
    <property type="term" value="F:GTP binding"/>
    <property type="evidence" value="ECO:0007669"/>
    <property type="project" value="UniProtKB-KW"/>
</dbReference>
<dbReference type="GO" id="GO:0046872">
    <property type="term" value="F:metal ion binding"/>
    <property type="evidence" value="ECO:0007669"/>
    <property type="project" value="UniProtKB-KW"/>
</dbReference>
<dbReference type="GO" id="GO:0043709">
    <property type="term" value="P:cell adhesion involved in single-species biofilm formation"/>
    <property type="evidence" value="ECO:0007669"/>
    <property type="project" value="TreeGrafter"/>
</dbReference>
<dbReference type="GO" id="GO:0030244">
    <property type="term" value="P:cellulose biosynthetic process"/>
    <property type="evidence" value="ECO:0007669"/>
    <property type="project" value="UniProtKB-KW"/>
</dbReference>
<dbReference type="GO" id="GO:1902201">
    <property type="term" value="P:negative regulation of bacterial-type flagellum-dependent cell motility"/>
    <property type="evidence" value="ECO:0007669"/>
    <property type="project" value="TreeGrafter"/>
</dbReference>
<dbReference type="CDD" id="cd01949">
    <property type="entry name" value="GGDEF"/>
    <property type="match status" value="1"/>
</dbReference>
<dbReference type="FunFam" id="3.30.70.270:FF:000001">
    <property type="entry name" value="Diguanylate cyclase domain protein"/>
    <property type="match status" value="1"/>
</dbReference>
<dbReference type="Gene3D" id="3.30.70.270">
    <property type="match status" value="1"/>
</dbReference>
<dbReference type="InterPro" id="IPR033416">
    <property type="entry name" value="CHASE7"/>
</dbReference>
<dbReference type="InterPro" id="IPR050469">
    <property type="entry name" value="Diguanylate_Cyclase"/>
</dbReference>
<dbReference type="InterPro" id="IPR000160">
    <property type="entry name" value="GGDEF_dom"/>
</dbReference>
<dbReference type="InterPro" id="IPR029787">
    <property type="entry name" value="Nucleotide_cyclase"/>
</dbReference>
<dbReference type="InterPro" id="IPR043128">
    <property type="entry name" value="Rev_trsase/Diguanyl_cyclase"/>
</dbReference>
<dbReference type="NCBIfam" id="TIGR00254">
    <property type="entry name" value="GGDEF"/>
    <property type="match status" value="1"/>
</dbReference>
<dbReference type="NCBIfam" id="NF011955">
    <property type="entry name" value="PRK15426.1"/>
    <property type="match status" value="1"/>
</dbReference>
<dbReference type="PANTHER" id="PTHR45138:SF16">
    <property type="entry name" value="DIGUANYLATE CYCLASE DGCQ-RELATED"/>
    <property type="match status" value="1"/>
</dbReference>
<dbReference type="PANTHER" id="PTHR45138">
    <property type="entry name" value="REGULATORY COMPONENTS OF SENSORY TRANSDUCTION SYSTEM"/>
    <property type="match status" value="1"/>
</dbReference>
<dbReference type="Pfam" id="PF17151">
    <property type="entry name" value="CHASE7"/>
    <property type="match status" value="1"/>
</dbReference>
<dbReference type="Pfam" id="PF00990">
    <property type="entry name" value="GGDEF"/>
    <property type="match status" value="1"/>
</dbReference>
<dbReference type="SMART" id="SM00267">
    <property type="entry name" value="GGDEF"/>
    <property type="match status" value="1"/>
</dbReference>
<dbReference type="SUPFAM" id="SSF55073">
    <property type="entry name" value="Nucleotide cyclase"/>
    <property type="match status" value="1"/>
</dbReference>
<dbReference type="PROSITE" id="PS50887">
    <property type="entry name" value="GGDEF"/>
    <property type="match status" value="1"/>
</dbReference>
<keyword id="KW-0997">Cell inner membrane</keyword>
<keyword id="KW-1003">Cell membrane</keyword>
<keyword id="KW-0135">Cellulose biosynthesis</keyword>
<keyword id="KW-0342">GTP-binding</keyword>
<keyword id="KW-0460">Magnesium</keyword>
<keyword id="KW-0472">Membrane</keyword>
<keyword id="KW-0479">Metal-binding</keyword>
<keyword id="KW-0547">Nucleotide-binding</keyword>
<keyword id="KW-1185">Reference proteome</keyword>
<keyword id="KW-0808">Transferase</keyword>
<keyword id="KW-0812">Transmembrane</keyword>
<keyword id="KW-1133">Transmembrane helix</keyword>
<sequence length="569" mass="64825">MGVVRVQHETKMENQSWLKKLARRLGPGHVVNLCFIVVLLFSTLLTWREVVVLEDAYISSQRNHLENVANALDKHLQYNVDKLIFLRNGMREALVAPLDFTSLRNAVTEFEQHRDEHAWQIELNRRRTLPVNGVSDALVSEGNFLSRENESLDNEITAALEVGYLLRLAHNSSSMVEQAMYVSRAGFYVSTQPTLFTRNVPTRYYGYVTQPWFIGHSQRENRHRAVRWFTSQPEHASNTEPQVTVSVPVDSNNYWYGVLGMSIPVRTMQQFLRNAIDKNLDGEYQLYDSKLRFLTSSNPDHPTGNIFDPRELALLAQAMEHDTRGGIRMDSRYVSWERLDHFDGVLARVHTLSEGVRGDFGSISIALTLLWALFTTMLLLSWYVIRRMVSNMYVLQSSLQWQAWHDTLTRLYNRGALFEKARPLAKLCQTHQHPFSVIQVDLDHFKAINDRFGHQAGDRVLSHAAGLISSSLRAQDVAGRVGGEEFCVILPGANLTQAAEVAERIRLKLNEKEMLIAKSTTIRISASLGVSSSEETGDYDFEQLQSLADRRLYLAKQAGRNRVFASDNA</sequence>
<evidence type="ECO:0000250" key="1">
    <source>
        <dbReference type="UniProtKB" id="P31129"/>
    </source>
</evidence>
<evidence type="ECO:0000250" key="2">
    <source>
        <dbReference type="UniProtKB" id="P76330"/>
    </source>
</evidence>
<evidence type="ECO:0000255" key="3"/>
<evidence type="ECO:0000255" key="4">
    <source>
        <dbReference type="PROSITE-ProRule" id="PRU00095"/>
    </source>
</evidence>
<evidence type="ECO:0000305" key="5"/>
<feature type="chain" id="PRO_0000248037" description="Putative diguanylate cyclase DgcQ">
    <location>
        <begin position="1"/>
        <end position="569"/>
    </location>
</feature>
<feature type="transmembrane region" description="Helical" evidence="3">
    <location>
        <begin position="25"/>
        <end position="45"/>
    </location>
</feature>
<feature type="transmembrane region" description="Helical" evidence="3">
    <location>
        <begin position="365"/>
        <end position="385"/>
    </location>
</feature>
<feature type="domain" description="GGDEF" evidence="4">
    <location>
        <begin position="433"/>
        <end position="568"/>
    </location>
</feature>
<feature type="active site" description="Proton acceptor" evidence="3">
    <location>
        <position position="484"/>
    </location>
</feature>
<feature type="binding site" evidence="1">
    <location>
        <position position="441"/>
    </location>
    <ligand>
        <name>Mg(2+)</name>
        <dbReference type="ChEBI" id="CHEBI:18420"/>
    </ligand>
</feature>
<feature type="binding site" evidence="1">
    <location>
        <position position="449"/>
    </location>
    <ligand>
        <name>substrate</name>
    </ligand>
</feature>
<feature type="binding site" evidence="1">
    <location>
        <position position="454"/>
    </location>
    <ligand>
        <name>substrate</name>
    </ligand>
</feature>
<feature type="binding site" evidence="1">
    <location>
        <position position="458"/>
    </location>
    <ligand>
        <name>substrate</name>
    </ligand>
</feature>
<feature type="binding site" evidence="1">
    <location>
        <position position="484"/>
    </location>
    <ligand>
        <name>Mg(2+)</name>
        <dbReference type="ChEBI" id="CHEBI:18420"/>
    </ligand>
</feature>
<feature type="site" description="Transition state stabilizer" evidence="3">
    <location>
        <position position="446"/>
    </location>
</feature>